<organism>
    <name type="scientific">Phalaenopsis aphrodite subsp. formosana</name>
    <name type="common">Moth orchid</name>
    <dbReference type="NCBI Taxonomy" id="308872"/>
    <lineage>
        <taxon>Eukaryota</taxon>
        <taxon>Viridiplantae</taxon>
        <taxon>Streptophyta</taxon>
        <taxon>Embryophyta</taxon>
        <taxon>Tracheophyta</taxon>
        <taxon>Spermatophyta</taxon>
        <taxon>Magnoliopsida</taxon>
        <taxon>Liliopsida</taxon>
        <taxon>Asparagales</taxon>
        <taxon>Orchidaceae</taxon>
        <taxon>Epidendroideae</taxon>
        <taxon>Vandeae</taxon>
        <taxon>Aeridinae</taxon>
        <taxon>Phalaenopsis</taxon>
    </lineage>
</organism>
<reference key="1">
    <citation type="journal article" date="2006" name="Mol. Biol. Evol.">
        <title>The chloroplast genome of Phalaenopsis aphrodite (Orchidaceae): comparative analysis of evolutionary rate with that of grasses and its phylogenetic implications.</title>
        <authorList>
            <person name="Chang C.-C."/>
            <person name="Lin H.-C."/>
            <person name="Lin I.-P."/>
            <person name="Chow T.-Y."/>
            <person name="Chen H.-H."/>
            <person name="Chen W.-H."/>
            <person name="Cheng C.-H."/>
            <person name="Lin C.-Y."/>
            <person name="Liu S.-M."/>
            <person name="Chang C.-C."/>
            <person name="Chaw S.-M."/>
        </authorList>
    </citation>
    <scope>NUCLEOTIDE SEQUENCE [LARGE SCALE GENOMIC DNA]</scope>
    <source>
        <strain>cv. Taisugar TS-97</strain>
    </source>
</reference>
<keyword id="KW-0150">Chloroplast</keyword>
<keyword id="KW-0249">Electron transport</keyword>
<keyword id="KW-0472">Membrane</keyword>
<keyword id="KW-0602">Photosynthesis</keyword>
<keyword id="KW-0934">Plastid</keyword>
<keyword id="KW-0793">Thylakoid</keyword>
<keyword id="KW-0812">Transmembrane</keyword>
<keyword id="KW-1133">Transmembrane helix</keyword>
<keyword id="KW-0813">Transport</keyword>
<evidence type="ECO:0000255" key="1">
    <source>
        <dbReference type="HAMAP-Rule" id="MF_00395"/>
    </source>
</evidence>
<accession>Q3BAP7</accession>
<geneLocation type="chloroplast"/>
<sequence>MDIVSFAWAALMVVFTFSLSLVVWGRSGL</sequence>
<dbReference type="EMBL" id="AY916449">
    <property type="protein sequence ID" value="AAW82496.1"/>
    <property type="molecule type" value="Genomic_DNA"/>
</dbReference>
<dbReference type="RefSeq" id="YP_358571.1">
    <property type="nucleotide sequence ID" value="NC_007499.1"/>
</dbReference>
<dbReference type="SMR" id="Q3BAP7"/>
<dbReference type="GeneID" id="3741647"/>
<dbReference type="GO" id="GO:0009535">
    <property type="term" value="C:chloroplast thylakoid membrane"/>
    <property type="evidence" value="ECO:0007669"/>
    <property type="project" value="UniProtKB-SubCell"/>
</dbReference>
<dbReference type="GO" id="GO:0009512">
    <property type="term" value="C:cytochrome b6f complex"/>
    <property type="evidence" value="ECO:0007669"/>
    <property type="project" value="InterPro"/>
</dbReference>
<dbReference type="GO" id="GO:0045158">
    <property type="term" value="F:electron transporter, transferring electrons within cytochrome b6/f complex of photosystem II activity"/>
    <property type="evidence" value="ECO:0007669"/>
    <property type="project" value="InterPro"/>
</dbReference>
<dbReference type="GO" id="GO:0017004">
    <property type="term" value="P:cytochrome complex assembly"/>
    <property type="evidence" value="ECO:0007669"/>
    <property type="project" value="UniProtKB-UniRule"/>
</dbReference>
<dbReference type="GO" id="GO:0015979">
    <property type="term" value="P:photosynthesis"/>
    <property type="evidence" value="ECO:0007669"/>
    <property type="project" value="UniProtKB-KW"/>
</dbReference>
<dbReference type="HAMAP" id="MF_00395">
    <property type="entry name" value="Cytb6_f_PetN"/>
    <property type="match status" value="1"/>
</dbReference>
<dbReference type="InterPro" id="IPR036143">
    <property type="entry name" value="Cytochr_b6-f_cplx_su8_sf"/>
</dbReference>
<dbReference type="InterPro" id="IPR005497">
    <property type="entry name" value="Cytochrome_b6-f_cplx_su8"/>
</dbReference>
<dbReference type="Pfam" id="PF03742">
    <property type="entry name" value="PetN"/>
    <property type="match status" value="1"/>
</dbReference>
<dbReference type="SUPFAM" id="SSF103451">
    <property type="entry name" value="PetN subunit of the cytochrome b6f complex"/>
    <property type="match status" value="1"/>
</dbReference>
<gene>
    <name evidence="1" type="primary">petN</name>
</gene>
<feature type="chain" id="PRO_0000275561" description="Cytochrome b6-f complex subunit 8">
    <location>
        <begin position="1"/>
        <end position="29"/>
    </location>
</feature>
<feature type="transmembrane region" description="Helical" evidence="1">
    <location>
        <begin position="3"/>
        <end position="23"/>
    </location>
</feature>
<protein>
    <recommendedName>
        <fullName evidence="1">Cytochrome b6-f complex subunit 8</fullName>
    </recommendedName>
    <alternativeName>
        <fullName evidence="1">Cytochrome b6-f complex subunit PetN</fullName>
    </alternativeName>
    <alternativeName>
        <fullName evidence="1">Cytochrome b6-f complex subunit VIII</fullName>
    </alternativeName>
</protein>
<proteinExistence type="inferred from homology"/>
<comment type="function">
    <text evidence="1">Component of the cytochrome b6-f complex, which mediates electron transfer between photosystem II (PSII) and photosystem I (PSI), cyclic electron flow around PSI, and state transitions.</text>
</comment>
<comment type="subunit">
    <text evidence="1">The 4 large subunits of the cytochrome b6-f complex are cytochrome b6, subunit IV (17 kDa polypeptide, PetD), cytochrome f and the Rieske protein, while the 4 small subunits are PetG, PetL, PetM and PetN. The complex functions as a dimer.</text>
</comment>
<comment type="subcellular location">
    <subcellularLocation>
        <location>Plastid</location>
        <location>Chloroplast thylakoid membrane</location>
        <topology>Single-pass membrane protein</topology>
    </subcellularLocation>
</comment>
<comment type="similarity">
    <text evidence="1">Belongs to the PetN family.</text>
</comment>
<name>PETN_PHAAO</name>